<comment type="function">
    <text evidence="1">Carrier of the growing fatty acid chain in fatty acid biosynthesis.</text>
</comment>
<comment type="pathway">
    <text evidence="1">Lipid metabolism; fatty acid biosynthesis.</text>
</comment>
<comment type="subcellular location">
    <subcellularLocation>
        <location evidence="1">Cytoplasm</location>
    </subcellularLocation>
</comment>
<comment type="PTM">
    <text evidence="1">4'-phosphopantetheine is transferred from CoA to a specific serine of apo-ACP by AcpS. This modification is essential for activity because fatty acids are bound in thioester linkage to the sulfhydryl of the prosthetic group.</text>
</comment>
<comment type="similarity">
    <text evidence="1">Belongs to the acyl carrier protein (ACP) family.</text>
</comment>
<gene>
    <name evidence="1" type="primary">acpP</name>
    <name type="ordered locus">DehaBAV1_1090</name>
</gene>
<protein>
    <recommendedName>
        <fullName evidence="1">Acyl carrier protein</fullName>
        <shortName evidence="1">ACP</shortName>
    </recommendedName>
</protein>
<sequence>MATVFERVKKVSVEQLGAEEKDVVLTASFADDLGADSLDQVELIMALETEFGTPETKFEIPDTDAEKLKTVQAVVDYLKSKGIKDS</sequence>
<name>ACP_DEHMB</name>
<feature type="chain" id="PRO_1000085598" description="Acyl carrier protein">
    <location>
        <begin position="1"/>
        <end position="86"/>
    </location>
</feature>
<feature type="domain" description="Carrier" evidence="2">
    <location>
        <begin position="2"/>
        <end position="82"/>
    </location>
</feature>
<feature type="modified residue" description="O-(pantetheine 4'-phosphoryl)serine" evidence="2">
    <location>
        <position position="37"/>
    </location>
</feature>
<reference key="1">
    <citation type="submission" date="2007-05" db="EMBL/GenBank/DDBJ databases">
        <title>Complete sequence of Dehalococcoides sp. BAV1.</title>
        <authorList>
            <consortium name="US DOE Joint Genome Institute"/>
            <person name="Copeland A."/>
            <person name="Lucas S."/>
            <person name="Lapidus A."/>
            <person name="Barry K."/>
            <person name="Detter J.C."/>
            <person name="Glavina del Rio T."/>
            <person name="Hammon N."/>
            <person name="Israni S."/>
            <person name="Pitluck S."/>
            <person name="Lowry S."/>
            <person name="Clum A."/>
            <person name="Schmutz J."/>
            <person name="Larimer F."/>
            <person name="Land M."/>
            <person name="Hauser L."/>
            <person name="Kyrpides N."/>
            <person name="Kim E."/>
            <person name="Ritalahti K.M."/>
            <person name="Loeffler F."/>
            <person name="Richardson P."/>
        </authorList>
    </citation>
    <scope>NUCLEOTIDE SEQUENCE [LARGE SCALE GENOMIC DNA]</scope>
    <source>
        <strain>ATCC BAA-2100 / JCM 16839 / KCTC 5957 / BAV1</strain>
    </source>
</reference>
<accession>A5FQ52</accession>
<keyword id="KW-0963">Cytoplasm</keyword>
<keyword id="KW-0275">Fatty acid biosynthesis</keyword>
<keyword id="KW-0276">Fatty acid metabolism</keyword>
<keyword id="KW-0444">Lipid biosynthesis</keyword>
<keyword id="KW-0443">Lipid metabolism</keyword>
<keyword id="KW-0596">Phosphopantetheine</keyword>
<keyword id="KW-0597">Phosphoprotein</keyword>
<proteinExistence type="inferred from homology"/>
<dbReference type="EMBL" id="CP000688">
    <property type="protein sequence ID" value="ABQ17670.1"/>
    <property type="molecule type" value="Genomic_DNA"/>
</dbReference>
<dbReference type="SMR" id="A5FQ52"/>
<dbReference type="KEGG" id="deb:DehaBAV1_1090"/>
<dbReference type="PATRIC" id="fig|216389.18.peg.1152"/>
<dbReference type="HOGENOM" id="CLU_108696_5_1_0"/>
<dbReference type="UniPathway" id="UPA00094"/>
<dbReference type="GO" id="GO:0005829">
    <property type="term" value="C:cytosol"/>
    <property type="evidence" value="ECO:0007669"/>
    <property type="project" value="TreeGrafter"/>
</dbReference>
<dbReference type="GO" id="GO:0016020">
    <property type="term" value="C:membrane"/>
    <property type="evidence" value="ECO:0007669"/>
    <property type="project" value="GOC"/>
</dbReference>
<dbReference type="GO" id="GO:0000035">
    <property type="term" value="F:acyl binding"/>
    <property type="evidence" value="ECO:0007669"/>
    <property type="project" value="TreeGrafter"/>
</dbReference>
<dbReference type="GO" id="GO:0000036">
    <property type="term" value="F:acyl carrier activity"/>
    <property type="evidence" value="ECO:0007669"/>
    <property type="project" value="UniProtKB-UniRule"/>
</dbReference>
<dbReference type="GO" id="GO:0009245">
    <property type="term" value="P:lipid A biosynthetic process"/>
    <property type="evidence" value="ECO:0007669"/>
    <property type="project" value="TreeGrafter"/>
</dbReference>
<dbReference type="Gene3D" id="1.10.1200.10">
    <property type="entry name" value="ACP-like"/>
    <property type="match status" value="1"/>
</dbReference>
<dbReference type="HAMAP" id="MF_01217">
    <property type="entry name" value="Acyl_carrier"/>
    <property type="match status" value="1"/>
</dbReference>
<dbReference type="InterPro" id="IPR003231">
    <property type="entry name" value="ACP"/>
</dbReference>
<dbReference type="InterPro" id="IPR036736">
    <property type="entry name" value="ACP-like_sf"/>
</dbReference>
<dbReference type="InterPro" id="IPR009081">
    <property type="entry name" value="PP-bd_ACP"/>
</dbReference>
<dbReference type="InterPro" id="IPR006162">
    <property type="entry name" value="Ppantetheine_attach_site"/>
</dbReference>
<dbReference type="NCBIfam" id="TIGR00517">
    <property type="entry name" value="acyl_carrier"/>
    <property type="match status" value="1"/>
</dbReference>
<dbReference type="NCBIfam" id="NF002148">
    <property type="entry name" value="PRK00982.1-2"/>
    <property type="match status" value="1"/>
</dbReference>
<dbReference type="NCBIfam" id="NF002150">
    <property type="entry name" value="PRK00982.1-4"/>
    <property type="match status" value="1"/>
</dbReference>
<dbReference type="NCBIfam" id="NF002151">
    <property type="entry name" value="PRK00982.1-5"/>
    <property type="match status" value="1"/>
</dbReference>
<dbReference type="PANTHER" id="PTHR20863">
    <property type="entry name" value="ACYL CARRIER PROTEIN"/>
    <property type="match status" value="1"/>
</dbReference>
<dbReference type="PANTHER" id="PTHR20863:SF76">
    <property type="entry name" value="CARRIER DOMAIN-CONTAINING PROTEIN"/>
    <property type="match status" value="1"/>
</dbReference>
<dbReference type="Pfam" id="PF00550">
    <property type="entry name" value="PP-binding"/>
    <property type="match status" value="1"/>
</dbReference>
<dbReference type="SUPFAM" id="SSF47336">
    <property type="entry name" value="ACP-like"/>
    <property type="match status" value="1"/>
</dbReference>
<dbReference type="PROSITE" id="PS50075">
    <property type="entry name" value="CARRIER"/>
    <property type="match status" value="1"/>
</dbReference>
<dbReference type="PROSITE" id="PS00012">
    <property type="entry name" value="PHOSPHOPANTETHEINE"/>
    <property type="match status" value="1"/>
</dbReference>
<organism>
    <name type="scientific">Dehalococcoides mccartyi (strain ATCC BAA-2100 / JCM 16839 / KCTC 5957 / BAV1)</name>
    <dbReference type="NCBI Taxonomy" id="216389"/>
    <lineage>
        <taxon>Bacteria</taxon>
        <taxon>Bacillati</taxon>
        <taxon>Chloroflexota</taxon>
        <taxon>Dehalococcoidia</taxon>
        <taxon>Dehalococcoidales</taxon>
        <taxon>Dehalococcoidaceae</taxon>
        <taxon>Dehalococcoides</taxon>
    </lineage>
</organism>
<evidence type="ECO:0000255" key="1">
    <source>
        <dbReference type="HAMAP-Rule" id="MF_01217"/>
    </source>
</evidence>
<evidence type="ECO:0000255" key="2">
    <source>
        <dbReference type="PROSITE-ProRule" id="PRU00258"/>
    </source>
</evidence>